<reference key="1">
    <citation type="journal article" date="1998" name="J. Dent. Res.">
        <title>Cloning, characterization, and tissue expression pattern of mouse tuftelin cDNA.</title>
        <authorList>
            <person name="MacDougall M."/>
            <person name="Simmons D."/>
            <person name="Dodds A."/>
            <person name="Knight C."/>
            <person name="Luan X."/>
            <person name="Zeichner-David M."/>
            <person name="Zhang C."/>
            <person name="Ryu O.H."/>
            <person name="Qian Q."/>
            <person name="Simmer J.P."/>
            <person name="Hu C.-C."/>
        </authorList>
    </citation>
    <scope>NUCLEOTIDE SEQUENCE [MRNA]</scope>
    <source>
        <tissue>Tooth</tissue>
    </source>
</reference>
<feature type="chain" id="PRO_0000183188" description="Tuftelin">
    <location>
        <begin position="1" status="less than"/>
        <end position="188" status="greater than"/>
    </location>
</feature>
<feature type="coiled-coil region" evidence="4">
    <location>
        <begin position="1"/>
        <end position="181"/>
    </location>
</feature>
<feature type="non-terminal residue">
    <location>
        <position position="1"/>
    </location>
</feature>
<feature type="non-terminal residue">
    <location>
        <position position="188"/>
    </location>
</feature>
<sequence length="188" mass="21960">SLRKTVQDLLVQLQEAERQHQSERVDFEATLSRYQREAEQSHVALQRAEDRVEQKEAEVEELQKRLLGMETEHQALLAKVREGVTALEELRGKNSDCRAEQEKAANLEKEVAGLREKIHHLDDMLKSQQRKVRQMIEQLQNSKTVIQSKDTAIQELKEKIAYLEAENLEMHDRMEHLIEKQISHGNFS</sequence>
<dbReference type="EMBL" id="AF030318">
    <property type="protein sequence ID" value="AAD01896.1"/>
    <property type="molecule type" value="mRNA"/>
</dbReference>
<dbReference type="SMR" id="O97557"/>
<dbReference type="STRING" id="9823.ENSSSCP00000007059"/>
<dbReference type="PeptideAtlas" id="O97557"/>
<dbReference type="eggNOG" id="ENOG502QW76">
    <property type="taxonomic scope" value="Eukaryota"/>
</dbReference>
<dbReference type="InParanoid" id="O97557"/>
<dbReference type="Proteomes" id="UP000008227">
    <property type="component" value="Unplaced"/>
</dbReference>
<dbReference type="Proteomes" id="UP000314985">
    <property type="component" value="Unplaced"/>
</dbReference>
<dbReference type="Proteomes" id="UP000694570">
    <property type="component" value="Unplaced"/>
</dbReference>
<dbReference type="Proteomes" id="UP000694571">
    <property type="component" value="Unplaced"/>
</dbReference>
<dbReference type="Proteomes" id="UP000694720">
    <property type="component" value="Unplaced"/>
</dbReference>
<dbReference type="Proteomes" id="UP000694722">
    <property type="component" value="Unplaced"/>
</dbReference>
<dbReference type="Proteomes" id="UP000694723">
    <property type="component" value="Unplaced"/>
</dbReference>
<dbReference type="Proteomes" id="UP000694724">
    <property type="component" value="Unplaced"/>
</dbReference>
<dbReference type="Proteomes" id="UP000694725">
    <property type="component" value="Unplaced"/>
</dbReference>
<dbReference type="Proteomes" id="UP000694726">
    <property type="component" value="Unplaced"/>
</dbReference>
<dbReference type="Proteomes" id="UP000694727">
    <property type="component" value="Unplaced"/>
</dbReference>
<dbReference type="Proteomes" id="UP000694728">
    <property type="component" value="Unplaced"/>
</dbReference>
<dbReference type="GO" id="GO:0005576">
    <property type="term" value="C:extracellular region"/>
    <property type="evidence" value="ECO:0007669"/>
    <property type="project" value="UniProtKB-SubCell"/>
</dbReference>
<dbReference type="GO" id="GO:0030280">
    <property type="term" value="F:structural constituent of skin epidermis"/>
    <property type="evidence" value="ECO:0000250"/>
    <property type="project" value="UniProtKB"/>
</dbReference>
<dbReference type="GO" id="GO:0031214">
    <property type="term" value="P:biomineral tissue development"/>
    <property type="evidence" value="ECO:0007669"/>
    <property type="project" value="UniProtKB-KW"/>
</dbReference>
<dbReference type="InterPro" id="IPR051375">
    <property type="entry name" value="Tuftelin_GRINL1A/MYZAP/CCD68"/>
</dbReference>
<dbReference type="PANTHER" id="PTHR23171">
    <property type="entry name" value="GDOWN1"/>
    <property type="match status" value="1"/>
</dbReference>
<dbReference type="PANTHER" id="PTHR23171:SF4">
    <property type="entry name" value="TUFTELIN"/>
    <property type="match status" value="1"/>
</dbReference>
<dbReference type="SUPFAM" id="SSF57997">
    <property type="entry name" value="Tropomyosin"/>
    <property type="match status" value="1"/>
</dbReference>
<comment type="function">
    <text evidence="2 3">Involved in the structural organization of the epidermis (By similarity). Involved in the mineralization and structural organization of enamel.</text>
</comment>
<comment type="subunit">
    <text evidence="1">Interacts with TFIP11.</text>
</comment>
<comment type="subcellular location">
    <subcellularLocation>
        <location evidence="2">Secreted</location>
    </subcellularLocation>
    <text evidence="2">Secreted at a very early stage of enamel formation, and tightly bound to the surface of the growing crystallites.</text>
</comment>
<comment type="similarity">
    <text evidence="5">Belongs to the tuftelin family.</text>
</comment>
<name>TUFT1_PIG</name>
<protein>
    <recommendedName>
        <fullName>Tuftelin</fullName>
    </recommendedName>
</protein>
<proteinExistence type="evidence at transcript level"/>
<gene>
    <name type="primary">TUFT1</name>
</gene>
<accession>O97557</accession>
<keyword id="KW-0091">Biomineralization</keyword>
<keyword id="KW-0175">Coiled coil</keyword>
<keyword id="KW-1185">Reference proteome</keyword>
<keyword id="KW-0964">Secreted</keyword>
<evidence type="ECO:0000250" key="1">
    <source>
        <dbReference type="UniProtKB" id="O08970"/>
    </source>
</evidence>
<evidence type="ECO:0000250" key="2">
    <source>
        <dbReference type="UniProtKB" id="P27628"/>
    </source>
</evidence>
<evidence type="ECO:0000250" key="3">
    <source>
        <dbReference type="UniProtKB" id="Q9NNX1"/>
    </source>
</evidence>
<evidence type="ECO:0000255" key="4"/>
<evidence type="ECO:0000305" key="5"/>
<organism>
    <name type="scientific">Sus scrofa</name>
    <name type="common">Pig</name>
    <dbReference type="NCBI Taxonomy" id="9823"/>
    <lineage>
        <taxon>Eukaryota</taxon>
        <taxon>Metazoa</taxon>
        <taxon>Chordata</taxon>
        <taxon>Craniata</taxon>
        <taxon>Vertebrata</taxon>
        <taxon>Euteleostomi</taxon>
        <taxon>Mammalia</taxon>
        <taxon>Eutheria</taxon>
        <taxon>Laurasiatheria</taxon>
        <taxon>Artiodactyla</taxon>
        <taxon>Suina</taxon>
        <taxon>Suidae</taxon>
        <taxon>Sus</taxon>
    </lineage>
</organism>